<dbReference type="EMBL" id="AC239798">
    <property type="status" value="NOT_ANNOTATED_CDS"/>
    <property type="molecule type" value="Genomic_DNA"/>
</dbReference>
<dbReference type="EMBL" id="AL109948">
    <property type="protein sequence ID" value="CAI23568.1"/>
    <property type="molecule type" value="Genomic_DNA"/>
</dbReference>
<dbReference type="CCDS" id="CCDS30842.1"/>
<dbReference type="RefSeq" id="NP_001342338.1">
    <property type="nucleotide sequence ID" value="NM_001355409.3"/>
</dbReference>
<dbReference type="RefSeq" id="NP_001359034.1">
    <property type="nucleotide sequence ID" value="NM_001372105.2"/>
</dbReference>
<dbReference type="PDB" id="4H75">
    <property type="method" value="X-ray"/>
    <property type="resolution" value="2.10 A"/>
    <property type="chains" value="B=2-9"/>
</dbReference>
<dbReference type="PDBsum" id="4H75"/>
<dbReference type="SMR" id="Q5TEC6"/>
<dbReference type="FunCoup" id="Q5TEC6">
    <property type="interactions" value="649"/>
</dbReference>
<dbReference type="IntAct" id="Q5TEC6">
    <property type="interactions" value="84"/>
</dbReference>
<dbReference type="STRING" id="9606.ENSP00000499501"/>
<dbReference type="GlyGen" id="Q5TEC6">
    <property type="glycosylation" value="1 site, 1 O-linked glycan (1 site)"/>
</dbReference>
<dbReference type="BioMuta" id="HIST2H3PS2"/>
<dbReference type="jPOST" id="Q5TEC6"/>
<dbReference type="MassIVE" id="Q5TEC6"/>
<dbReference type="PaxDb" id="9606-ENSP00000476960"/>
<dbReference type="PeptideAtlas" id="Q5TEC6"/>
<dbReference type="ProteomicsDB" id="65042"/>
<dbReference type="Antibodypedia" id="79211">
    <property type="antibodies" value="181 antibodies from 2 providers"/>
</dbReference>
<dbReference type="Ensembl" id="ENST00000392948.5">
    <property type="protein sequence ID" value="ENSP00000476960.1"/>
    <property type="gene ID" value="ENSG00000273213.4"/>
</dbReference>
<dbReference type="Ensembl" id="ENST00000609879.2">
    <property type="protein sequence ID" value="ENSP00000499501.1"/>
    <property type="gene ID" value="ENSG00000273213.4"/>
</dbReference>
<dbReference type="GeneID" id="440686"/>
<dbReference type="MANE-Select" id="ENST00000392948.5">
    <property type="protein sequence ID" value="ENSP00000476960.1"/>
    <property type="RefSeq nucleotide sequence ID" value="NM_001372105.2"/>
    <property type="RefSeq protein sequence ID" value="NP_001359034.1"/>
</dbReference>
<dbReference type="UCSC" id="uc057jyp.1">
    <property type="organism name" value="human"/>
</dbReference>
<dbReference type="AGR" id="HGNC:32060"/>
<dbReference type="GeneCards" id="H3-7"/>
<dbReference type="HGNC" id="HGNC:32060">
    <property type="gene designation" value="H3-7"/>
</dbReference>
<dbReference type="HPA" id="ENSG00000273213">
    <property type="expression patterns" value="Low tissue specificity"/>
</dbReference>
<dbReference type="neXtProt" id="NX_Q5TEC6"/>
<dbReference type="OpenTargets" id="ENSG00000273213"/>
<dbReference type="VEuPathDB" id="HostDB:ENSG00000273213"/>
<dbReference type="eggNOG" id="KOG1745">
    <property type="taxonomic scope" value="Eukaryota"/>
</dbReference>
<dbReference type="GeneTree" id="ENSGT01130000278271"/>
<dbReference type="HOGENOM" id="CLU_078295_4_0_1"/>
<dbReference type="InParanoid" id="Q5TEC6"/>
<dbReference type="PAN-GO" id="Q5TEC6">
    <property type="GO annotations" value="1 GO annotation based on evolutionary models"/>
</dbReference>
<dbReference type="PhylomeDB" id="Q5TEC6"/>
<dbReference type="TreeFam" id="TF314241"/>
<dbReference type="SignaLink" id="Q5TEC6"/>
<dbReference type="SIGNOR" id="Q5TEC6"/>
<dbReference type="EvolutionaryTrace" id="Q5TEC6"/>
<dbReference type="PRO" id="PR:Q5TEC6"/>
<dbReference type="Proteomes" id="UP000005640">
    <property type="component" value="Chromosome 1"/>
</dbReference>
<dbReference type="RNAct" id="Q5TEC6">
    <property type="molecule type" value="protein"/>
</dbReference>
<dbReference type="Bgee" id="ENSG00000273213">
    <property type="expression patterns" value="Expressed in left ovary and 123 other cell types or tissues"/>
</dbReference>
<dbReference type="ExpressionAtlas" id="Q5TEC6">
    <property type="expression patterns" value="baseline and differential"/>
</dbReference>
<dbReference type="GO" id="GO:0005654">
    <property type="term" value="C:nucleoplasm"/>
    <property type="evidence" value="ECO:0000314"/>
    <property type="project" value="HPA"/>
</dbReference>
<dbReference type="GO" id="GO:0000786">
    <property type="term" value="C:nucleosome"/>
    <property type="evidence" value="ECO:0007669"/>
    <property type="project" value="UniProtKB-KW"/>
</dbReference>
<dbReference type="GO" id="GO:0005634">
    <property type="term" value="C:nucleus"/>
    <property type="evidence" value="ECO:0007005"/>
    <property type="project" value="UniProtKB"/>
</dbReference>
<dbReference type="GO" id="GO:0003677">
    <property type="term" value="F:DNA binding"/>
    <property type="evidence" value="ECO:0007669"/>
    <property type="project" value="UniProtKB-KW"/>
</dbReference>
<dbReference type="GO" id="GO:0046982">
    <property type="term" value="F:protein heterodimerization activity"/>
    <property type="evidence" value="ECO:0007669"/>
    <property type="project" value="InterPro"/>
</dbReference>
<dbReference type="GO" id="GO:0030527">
    <property type="term" value="F:structural constituent of chromatin"/>
    <property type="evidence" value="ECO:0007669"/>
    <property type="project" value="InterPro"/>
</dbReference>
<dbReference type="CDD" id="cd22911">
    <property type="entry name" value="HFD_H3"/>
    <property type="match status" value="1"/>
</dbReference>
<dbReference type="FunFam" id="1.10.20.10:FF:000078">
    <property type="entry name" value="Histone H3"/>
    <property type="match status" value="1"/>
</dbReference>
<dbReference type="FunFam" id="1.10.20.10:FF:000044">
    <property type="entry name" value="Histone H3.3"/>
    <property type="match status" value="1"/>
</dbReference>
<dbReference type="Gene3D" id="1.10.20.10">
    <property type="entry name" value="Histone, subunit A"/>
    <property type="match status" value="1"/>
</dbReference>
<dbReference type="InterPro" id="IPR009072">
    <property type="entry name" value="Histone-fold"/>
</dbReference>
<dbReference type="InterPro" id="IPR007125">
    <property type="entry name" value="Histone_H2A/H2B/H3"/>
</dbReference>
<dbReference type="InterPro" id="IPR000164">
    <property type="entry name" value="Histone_H3/CENP-A"/>
</dbReference>
<dbReference type="PANTHER" id="PTHR11426">
    <property type="entry name" value="HISTONE H3"/>
    <property type="match status" value="1"/>
</dbReference>
<dbReference type="Pfam" id="PF00125">
    <property type="entry name" value="Histone"/>
    <property type="match status" value="1"/>
</dbReference>
<dbReference type="PRINTS" id="PR00622">
    <property type="entry name" value="HISTONEH3"/>
</dbReference>
<dbReference type="SMART" id="SM00428">
    <property type="entry name" value="H3"/>
    <property type="match status" value="1"/>
</dbReference>
<dbReference type="SUPFAM" id="SSF47113">
    <property type="entry name" value="Histone-fold"/>
    <property type="match status" value="1"/>
</dbReference>
<dbReference type="PROSITE" id="PS00322">
    <property type="entry name" value="HISTONE_H3_1"/>
    <property type="match status" value="1"/>
</dbReference>
<dbReference type="PROSITE" id="PS00959">
    <property type="entry name" value="HISTONE_H3_2"/>
    <property type="match status" value="1"/>
</dbReference>
<proteinExistence type="evidence at protein level"/>
<keyword id="KW-0002">3D-structure</keyword>
<keyword id="KW-0007">Acetylation</keyword>
<keyword id="KW-0013">ADP-ribosylation</keyword>
<keyword id="KW-0158">Chromosome</keyword>
<keyword id="KW-0164">Citrullination</keyword>
<keyword id="KW-0238">DNA-binding</keyword>
<keyword id="KW-0379">Hydroxylation</keyword>
<keyword id="KW-0488">Methylation</keyword>
<keyword id="KW-0544">Nucleosome core</keyword>
<keyword id="KW-0539">Nucleus</keyword>
<keyword id="KW-0597">Phosphoprotein</keyword>
<keyword id="KW-1267">Proteomics identification</keyword>
<keyword id="KW-1185">Reference proteome</keyword>
<keyword id="KW-0832">Ubl conjugation</keyword>
<comment type="function">
    <text evidence="1">Core component of nucleosome. Nucleosomes wrap and compact DNA into chromatin, limiting DNA accessibility to the cellular machineries which require DNA as a template. Histones thereby play a central role in transcription regulation, DNA repair, DNA replication and chromosomal stability. DNA accessibility is regulated via a complex set of post-translational modifications of histones, also called histone code, and nucleosome remodeling.</text>
</comment>
<comment type="subunit">
    <text evidence="1">The nucleosome is a histone octamer containing two molecules each of H2A, H2B, H3 and H4 assembled in one H3-H4 heterotetramer and two H2A-H2B heterodimers. The octamer wraps approximately 147 bp of DNA. During nucleosome assembly the chaperone ASF1A interacts with the histone H3-H4 heterodimer.</text>
</comment>
<comment type="subcellular location">
    <subcellularLocation>
        <location evidence="8">Nucleus</location>
    </subcellularLocation>
    <subcellularLocation>
        <location evidence="8">Chromosome</location>
    </subcellularLocation>
</comment>
<comment type="PTM">
    <text evidence="4">Acetylation is generally linked to gene activation. Acetylation on Lys-10 (H3K9ac) impairs methylation at Arg-9 (H3R8me2s). Acetylation on Lys-19 (H3K18ac) and Lys-24 (H3K24ac) favors methylation at Arg-18 (H3R17me). Acetylation at Lys-123 (H3K122ac) by EP300/p300 plays a central role in chromatin structure: localizes at the surface of the histone octamer and stimulates transcription, possibly by promoting nucleosome instability (By similarity).</text>
</comment>
<comment type="PTM">
    <text evidence="4">Citrullination at Arg-9 (H3R8ci) and/or Arg-18 (H3R17ci) by PADI4 impairs methylation and represses transcription.</text>
</comment>
<comment type="PTM">
    <text evidence="4">Asymmetric dimethylation at Arg-18 (H3R17me2a) by CARM1 is linked to gene activation. Symmetric dimethylation at Arg-9 (H3R8me2s) by PRMT5 is linked to gene repression. Asymmetric dimethylation at Arg-3 (H3R2me2a) by PRMT6 is linked to gene repression and is mutually exclusive with H3 Lys-5 methylation (H3K4me2 and H3K4me3). H3R2me2a is present at the 3' of genes regardless of their transcription state and is enriched on inactive promoters, while it is absent on active promoters (By similarity).</text>
</comment>
<comment type="PTM">
    <text evidence="4">Methylation at Lys-5 (H3K4me), Lys-37 (H3K36me) and Lys-80 (H3K79me) are linked to gene activation. Methylation at Lys-5 (H3K4me) facilitates subsequent acetylation of H3 and H4. Methylation at Lys-80 (H3K79me) is associated with DNA double-strand break (DSB) responses and is a specific target for TP53BP1. Methylation at Lys-10 (H3K9me) and Lys-28 (H3K27me) are linked to gene repression. Methylation at Lys-10 (H3K9me) is a specific target for HP1 proteins (CBX1, CBX3 and CBX5) and prevents subsequent phosphorylation at Ser-11 (H3S10ph) and acetylation of H3 and H4. Methylation at Lys-5 (H3K4me) and Lys-80 (H3K79me) require preliminary monoubiquitination of H2B at 'Lys-120'. Methylation at Lys-10 (H3K9me) and Lys-28 (H3K27me) are enriched in inactive X chromosome chromatin. Monomethylation at Lys-57 (H3K56me1) by EHMT2/G9A in G1 phase promotes interaction with PCNA and is required for DNA replication (By similarity).</text>
</comment>
<comment type="PTM">
    <text evidence="4">Phosphorylated at Thr-4 (H3T3ph) by HASPIN during prophase and dephosphorylated during anaphase. Phosphorylation at Ser-11 (H3S10ph) by AURKB is crucial for chromosome condensation and cell-cycle progression during mitosis and meiosis. In addition phosphorylation at Ser-11 (H3S10ph) by RPS6KA4 and RPS6KA5 is important during interphase because it enables the transcription of genes following external stimulation, like mitogens, stress, growth factors or UV irradiation and result in the activation of genes, such as c-fos and c-jun. Phosphorylation at Ser-11 (H3S10ph), which is linked to gene activation, prevents methylation at Lys-10 (H3K9me) but facilitates acetylation of H3 and H4. Phosphorylation at Ser-11 (H3S10ph) by AURKB mediates the dissociation of HP1 proteins (CBX1, CBX3 and CBX5) from heterochromatin. Phosphorylation at Ser-11 (H3S10ph) is also an essential regulatory mechanism for neoplastic cell transformation. Phosphorylated at Ser-29 (H3S28ph) by MAP3K20 isoform 1, RPS6KA5 or AURKB during mitosis or upon ultraviolet B irradiation. Phosphorylation at Thr-7 (H3T6ph) by PRKCB is a specific tag for epigenetic transcriptional activation that prevents demethylation of Lys-5 (H3K4me) by LSD1/KDM1A. At centromeres, specifically phosphorylated at Thr-12 (H3T11ph) from prophase to early anaphase, by DAPK3 and PKN1. Phosphorylation at Thr-12 (H3T11ph) by PKN1 or isoform M2 of PKM (PKM2) is a specific tag for epigenetic transcriptional activation that promotes demethylation of Lys-10 (H3K9me) by KDM4C/JMJD2C. Phosphorylation at Tyr-42 (H3Y41ph) by JAK2 promotes exclusion of CBX5 (HP1 alpha) from chromatin (By similarity).</text>
</comment>
<comment type="PTM">
    <text evidence="4">Ubiquitinated.</text>
</comment>
<comment type="PTM">
    <text evidence="4">Lysine deamination at Lys-5 (H3K4all) to form allysine is mediated by LOXL2. Allysine formation by LOXL2 only takes place on H3K4me3 and results in gene repression (By similarity).</text>
</comment>
<comment type="PTM">
    <text evidence="4">Butyrylation of histones marks active promoters and competes with histone acetylation. It is present during late spermatogenesis.</text>
</comment>
<comment type="PTM">
    <text evidence="1">Succinylation at Lys-80 (H3K79succ) by KAT2A takes place with a maximum frequency around the transcription start sites of genes. It gives a specific tag for epigenetic transcription activation. Desuccinylation at Lys-123 (H3K122succ) by SIRT7 in response to DNA damage promotes chromatin condensation and double-strand breaks (DSBs) repair.</text>
</comment>
<comment type="PTM">
    <text evidence="1">Serine ADP-ribosylation constitutes the primary form of ADP-ribosylation of proteins in response to DNA damage. Serine ADP-ribosylation at Ser-11 (H3S10ADPr) is mutually exclusive with phosphorylation at Ser-11 (H3S10ph) and impairs acetylation at Lys-10 (H3K9ac).</text>
</comment>
<comment type="similarity">
    <text evidence="8">Belongs to the histone H3 family.</text>
</comment>
<organism evidence="9">
    <name type="scientific">Homo sapiens</name>
    <name type="common">Human</name>
    <dbReference type="NCBI Taxonomy" id="9606"/>
    <lineage>
        <taxon>Eukaryota</taxon>
        <taxon>Metazoa</taxon>
        <taxon>Chordata</taxon>
        <taxon>Craniata</taxon>
        <taxon>Vertebrata</taxon>
        <taxon>Euteleostomi</taxon>
        <taxon>Mammalia</taxon>
        <taxon>Eutheria</taxon>
        <taxon>Euarchontoglires</taxon>
        <taxon>Primates</taxon>
        <taxon>Haplorrhini</taxon>
        <taxon>Catarrhini</taxon>
        <taxon>Hominidae</taxon>
        <taxon>Homo</taxon>
    </lineage>
</organism>
<accession>Q5TEC6</accession>
<evidence type="ECO:0000250" key="1">
    <source>
        <dbReference type="UniProtKB" id="P68431"/>
    </source>
</evidence>
<evidence type="ECO:0000250" key="2">
    <source>
        <dbReference type="UniProtKB" id="P68432"/>
    </source>
</evidence>
<evidence type="ECO:0000250" key="3">
    <source>
        <dbReference type="UniProtKB" id="P68433"/>
    </source>
</evidence>
<evidence type="ECO:0000250" key="4">
    <source>
        <dbReference type="UniProtKB" id="P84243"/>
    </source>
</evidence>
<evidence type="ECO:0000250" key="5">
    <source>
        <dbReference type="UniProtKB" id="Q16695"/>
    </source>
</evidence>
<evidence type="ECO:0000250" key="6">
    <source>
        <dbReference type="UniProtKB" id="Q71DI3"/>
    </source>
</evidence>
<evidence type="ECO:0000256" key="7">
    <source>
        <dbReference type="SAM" id="MobiDB-lite"/>
    </source>
</evidence>
<evidence type="ECO:0000305" key="8"/>
<evidence type="ECO:0000312" key="9">
    <source>
        <dbReference type="EMBL" id="CAI23568.1"/>
    </source>
</evidence>
<evidence type="ECO:0000312" key="10">
    <source>
        <dbReference type="HGNC" id="HGNC:32060"/>
    </source>
</evidence>
<evidence type="ECO:0007744" key="11">
    <source>
        <dbReference type="PDB" id="4H75"/>
    </source>
</evidence>
<reference key="1">
    <citation type="journal article" date="2006" name="Nature">
        <title>The DNA sequence and biological annotation of human chromosome 1.</title>
        <authorList>
            <person name="Gregory S.G."/>
            <person name="Barlow K.F."/>
            <person name="McLay K.E."/>
            <person name="Kaul R."/>
            <person name="Swarbreck D."/>
            <person name="Dunham A."/>
            <person name="Scott C.E."/>
            <person name="Howe K.L."/>
            <person name="Woodfine K."/>
            <person name="Spencer C.C.A."/>
            <person name="Jones M.C."/>
            <person name="Gillson C."/>
            <person name="Searle S."/>
            <person name="Zhou Y."/>
            <person name="Kokocinski F."/>
            <person name="McDonald L."/>
            <person name="Evans R."/>
            <person name="Phillips K."/>
            <person name="Atkinson A."/>
            <person name="Cooper R."/>
            <person name="Jones C."/>
            <person name="Hall R.E."/>
            <person name="Andrews T.D."/>
            <person name="Lloyd C."/>
            <person name="Ainscough R."/>
            <person name="Almeida J.P."/>
            <person name="Ambrose K.D."/>
            <person name="Anderson F."/>
            <person name="Andrew R.W."/>
            <person name="Ashwell R.I.S."/>
            <person name="Aubin K."/>
            <person name="Babbage A.K."/>
            <person name="Bagguley C.L."/>
            <person name="Bailey J."/>
            <person name="Beasley H."/>
            <person name="Bethel G."/>
            <person name="Bird C.P."/>
            <person name="Bray-Allen S."/>
            <person name="Brown J.Y."/>
            <person name="Brown A.J."/>
            <person name="Buckley D."/>
            <person name="Burton J."/>
            <person name="Bye J."/>
            <person name="Carder C."/>
            <person name="Chapman J.C."/>
            <person name="Clark S.Y."/>
            <person name="Clarke G."/>
            <person name="Clee C."/>
            <person name="Cobley V."/>
            <person name="Collier R.E."/>
            <person name="Corby N."/>
            <person name="Coville G.J."/>
            <person name="Davies J."/>
            <person name="Deadman R."/>
            <person name="Dunn M."/>
            <person name="Earthrowl M."/>
            <person name="Ellington A.G."/>
            <person name="Errington H."/>
            <person name="Frankish A."/>
            <person name="Frankland J."/>
            <person name="French L."/>
            <person name="Garner P."/>
            <person name="Garnett J."/>
            <person name="Gay L."/>
            <person name="Ghori M.R.J."/>
            <person name="Gibson R."/>
            <person name="Gilby L.M."/>
            <person name="Gillett W."/>
            <person name="Glithero R.J."/>
            <person name="Grafham D.V."/>
            <person name="Griffiths C."/>
            <person name="Griffiths-Jones S."/>
            <person name="Grocock R."/>
            <person name="Hammond S."/>
            <person name="Harrison E.S.I."/>
            <person name="Hart E."/>
            <person name="Haugen E."/>
            <person name="Heath P.D."/>
            <person name="Holmes S."/>
            <person name="Holt K."/>
            <person name="Howden P.J."/>
            <person name="Hunt A.R."/>
            <person name="Hunt S.E."/>
            <person name="Hunter G."/>
            <person name="Isherwood J."/>
            <person name="James R."/>
            <person name="Johnson C."/>
            <person name="Johnson D."/>
            <person name="Joy A."/>
            <person name="Kay M."/>
            <person name="Kershaw J.K."/>
            <person name="Kibukawa M."/>
            <person name="Kimberley A.M."/>
            <person name="King A."/>
            <person name="Knights A.J."/>
            <person name="Lad H."/>
            <person name="Laird G."/>
            <person name="Lawlor S."/>
            <person name="Leongamornlert D.A."/>
            <person name="Lloyd D.M."/>
            <person name="Loveland J."/>
            <person name="Lovell J."/>
            <person name="Lush M.J."/>
            <person name="Lyne R."/>
            <person name="Martin S."/>
            <person name="Mashreghi-Mohammadi M."/>
            <person name="Matthews L."/>
            <person name="Matthews N.S.W."/>
            <person name="McLaren S."/>
            <person name="Milne S."/>
            <person name="Mistry S."/>
            <person name="Moore M.J.F."/>
            <person name="Nickerson T."/>
            <person name="O'Dell C.N."/>
            <person name="Oliver K."/>
            <person name="Palmeiri A."/>
            <person name="Palmer S.A."/>
            <person name="Parker A."/>
            <person name="Patel D."/>
            <person name="Pearce A.V."/>
            <person name="Peck A.I."/>
            <person name="Pelan S."/>
            <person name="Phelps K."/>
            <person name="Phillimore B.J."/>
            <person name="Plumb R."/>
            <person name="Rajan J."/>
            <person name="Raymond C."/>
            <person name="Rouse G."/>
            <person name="Saenphimmachak C."/>
            <person name="Sehra H.K."/>
            <person name="Sheridan E."/>
            <person name="Shownkeen R."/>
            <person name="Sims S."/>
            <person name="Skuce C.D."/>
            <person name="Smith M."/>
            <person name="Steward C."/>
            <person name="Subramanian S."/>
            <person name="Sycamore N."/>
            <person name="Tracey A."/>
            <person name="Tromans A."/>
            <person name="Van Helmond Z."/>
            <person name="Wall M."/>
            <person name="Wallis J.M."/>
            <person name="White S."/>
            <person name="Whitehead S.L."/>
            <person name="Wilkinson J.E."/>
            <person name="Willey D.L."/>
            <person name="Williams H."/>
            <person name="Wilming L."/>
            <person name="Wray P.W."/>
            <person name="Wu Z."/>
            <person name="Coulson A."/>
            <person name="Vaudin M."/>
            <person name="Sulston J.E."/>
            <person name="Durbin R.M."/>
            <person name="Hubbard T."/>
            <person name="Wooster R."/>
            <person name="Dunham I."/>
            <person name="Carter N.P."/>
            <person name="McVean G."/>
            <person name="Ross M.T."/>
            <person name="Harrow J."/>
            <person name="Olson M.V."/>
            <person name="Beck S."/>
            <person name="Rogers J."/>
            <person name="Bentley D.R."/>
        </authorList>
    </citation>
    <scope>NUCLEOTIDE SEQUENCE [LARGE SCALE GENOMIC DNA]</scope>
</reference>
<reference evidence="11" key="2">
    <citation type="journal article" date="2012" name="Proc. Natl. Acad. Sci. U.S.A.">
        <title>Distinct mode of methylated lysine-4 of histone H3 recognition by tandem tudor-like domains of Spindlin1.</title>
        <authorList>
            <person name="Yang N."/>
            <person name="Wang W."/>
            <person name="Wang Y."/>
            <person name="Wang M."/>
            <person name="Zhao Q."/>
            <person name="Rao Z."/>
            <person name="Zhu B."/>
            <person name="Xu R.M."/>
        </authorList>
    </citation>
    <scope>X-RAY CRYSTALLOGRAPHY (2.10 ANGSTROMS) OF 2-9 IN COMPLEX WITH SPIN1</scope>
</reference>
<protein>
    <recommendedName>
        <fullName evidence="8">Histone H3-7</fullName>
    </recommendedName>
</protein>
<sequence>MARTKQTARKSTGGKAPRKQLATKAARKSAPATGGVKKPHRYRPGTVALREIRRYQKSTELLIRKLPFQRLVREIAQEFKTDLRFQSSAVMALQEAREAYLVGLFEDTNLCAIHAKRVTIMPKDIQLVSRIRGERA</sequence>
<gene>
    <name evidence="10" type="primary">H3-7</name>
    <name type="synonym">H3-2</name>
    <name evidence="10" type="synonym">HIST2H3PS2</name>
</gene>
<name>H37_HUMAN</name>
<feature type="initiator methionine" description="Removed" evidence="5">
    <location>
        <position position="1"/>
    </location>
</feature>
<feature type="chain" id="PRO_0000451612" description="Histone H3-7">
    <location>
        <begin position="2"/>
        <end position="136"/>
    </location>
</feature>
<feature type="region of interest" description="Disordered" evidence="7">
    <location>
        <begin position="1"/>
        <end position="43"/>
    </location>
</feature>
<feature type="modified residue" description="Asymmetric dimethylarginine" evidence="1">
    <location>
        <position position="3"/>
    </location>
</feature>
<feature type="modified residue" description="Citrulline; alternate" evidence="4">
    <location>
        <position position="3"/>
    </location>
</feature>
<feature type="modified residue" description="Phosphothreonine" evidence="1">
    <location>
        <position position="4"/>
    </location>
</feature>
<feature type="modified residue" description="Allysine; alternate" evidence="4">
    <location>
        <position position="5"/>
    </location>
</feature>
<feature type="modified residue" description="N6,N6,N6-trimethyllysine; alternate" evidence="1">
    <location>
        <position position="5"/>
    </location>
</feature>
<feature type="modified residue" description="N6,N6-dimethyllysine; alternate" evidence="1">
    <location>
        <position position="5"/>
    </location>
</feature>
<feature type="modified residue" description="N6-(2-hydroxyisobutyryl)lysine; alternate" evidence="1">
    <location>
        <position position="5"/>
    </location>
</feature>
<feature type="modified residue" description="N6-(beta-hydroxybutyryl)lysine; alternate" evidence="3">
    <location>
        <position position="5"/>
    </location>
</feature>
<feature type="modified residue" description="N6-acetyllysine; alternate" evidence="1">
    <location>
        <position position="5"/>
    </location>
</feature>
<feature type="modified residue" description="N6-methyllysine; alternate" evidence="1">
    <location>
        <position position="5"/>
    </location>
</feature>
<feature type="modified residue" description="5-glutamyl dopamine; alternate" evidence="1">
    <location>
        <position position="6"/>
    </location>
</feature>
<feature type="modified residue" description="5-glutamyl serotonin; alternate" evidence="1">
    <location>
        <position position="6"/>
    </location>
</feature>
<feature type="modified residue" description="Phosphothreonine" evidence="1">
    <location>
        <position position="7"/>
    </location>
</feature>
<feature type="modified residue" description="Citrulline; alternate" evidence="4">
    <location>
        <position position="9"/>
    </location>
</feature>
<feature type="modified residue" description="Symmetric dimethylarginine" evidence="3">
    <location>
        <position position="9"/>
    </location>
</feature>
<feature type="modified residue" description="N6,N6,N6-trimethyllysine; alternate" evidence="2">
    <location>
        <position position="10"/>
    </location>
</feature>
<feature type="modified residue" description="N6,N6-dimethyllysine; alternate" evidence="2">
    <location>
        <position position="10"/>
    </location>
</feature>
<feature type="modified residue" description="N6-(2-hydroxyisobutyryl)lysine; alternate" evidence="1">
    <location>
        <position position="10"/>
    </location>
</feature>
<feature type="modified residue" description="N6-(beta-hydroxybutyryl)lysine; alternate" evidence="3">
    <location>
        <position position="10"/>
    </location>
</feature>
<feature type="modified residue" description="N6-acetyllysine; alternate" evidence="1">
    <location>
        <position position="10"/>
    </location>
</feature>
<feature type="modified residue" description="N6-lactoyllysine; alternate" evidence="1">
    <location>
        <position position="10"/>
    </location>
</feature>
<feature type="modified residue" description="N6-methyllysine; alternate" evidence="2">
    <location>
        <position position="10"/>
    </location>
</feature>
<feature type="modified residue" description="ADP-ribosylserine; alternate" evidence="1">
    <location>
        <position position="11"/>
    </location>
</feature>
<feature type="modified residue" description="Phosphoserine; alternate" evidence="2">
    <location>
        <position position="11"/>
    </location>
</feature>
<feature type="modified residue" description="Phosphothreonine" evidence="1">
    <location>
        <position position="12"/>
    </location>
</feature>
<feature type="modified residue" description="N6-(2-hydroxyisobutyryl)lysine; alternate" evidence="1">
    <location>
        <position position="15"/>
    </location>
</feature>
<feature type="modified residue" description="N6-(beta-hydroxybutyryl)lysine; alternate" evidence="3">
    <location>
        <position position="15"/>
    </location>
</feature>
<feature type="modified residue" description="N6-acetyllysine; alternate" evidence="2">
    <location>
        <position position="15"/>
    </location>
</feature>
<feature type="modified residue" description="N6-glutaryllysine; alternate" evidence="4">
    <location>
        <position position="15"/>
    </location>
</feature>
<feature type="modified residue" description="N6-lactoyllysine; alternate" evidence="3">
    <location>
        <position position="15"/>
    </location>
</feature>
<feature type="modified residue" description="N6-succinyllysine; alternate" evidence="1">
    <location>
        <position position="15"/>
    </location>
</feature>
<feature type="modified residue" description="Asymmetric dimethylarginine" evidence="1">
    <location>
        <position position="18"/>
    </location>
</feature>
<feature type="modified residue" description="Citrulline; alternate" evidence="4">
    <location>
        <position position="18"/>
    </location>
</feature>
<feature type="modified residue" description="N6-(2-hydroxyisobutyryl)lysine; alternate" evidence="1">
    <location>
        <position position="19"/>
    </location>
</feature>
<feature type="modified residue" description="N6-(beta-hydroxybutyryl)lysine; alternate" evidence="3">
    <location>
        <position position="19"/>
    </location>
</feature>
<feature type="modified residue" description="N6-acetyllysine; alternate" evidence="5">
    <location>
        <position position="19"/>
    </location>
</feature>
<feature type="modified residue" description="N6-butyryllysine; alternate" evidence="3">
    <location>
        <position position="19"/>
    </location>
</feature>
<feature type="modified residue" description="N6-glutaryllysine; alternate" evidence="4">
    <location>
        <position position="19"/>
    </location>
</feature>
<feature type="modified residue" description="N6-lactoyllysine; alternate" evidence="1">
    <location>
        <position position="19"/>
    </location>
</feature>
<feature type="modified residue" description="N6-methyllysine; alternate" evidence="1">
    <location>
        <position position="19"/>
    </location>
</feature>
<feature type="modified residue" description="N6-(2-hydroxyisobutyryl)lysine; alternate" evidence="1">
    <location>
        <position position="24"/>
    </location>
</feature>
<feature type="modified residue" description="N6-(beta-hydroxybutyryl)lysine; alternate" evidence="3">
    <location>
        <position position="24"/>
    </location>
</feature>
<feature type="modified residue" description="N6-acetyllysine; alternate" evidence="5">
    <location>
        <position position="24"/>
    </location>
</feature>
<feature type="modified residue" description="N6-butyryllysine; alternate" evidence="3">
    <location>
        <position position="24"/>
    </location>
</feature>
<feature type="modified residue" description="N6-glutaryllysine; alternate" evidence="4">
    <location>
        <position position="24"/>
    </location>
</feature>
<feature type="modified residue" description="N6-lactoyllysine; alternate" evidence="1">
    <location>
        <position position="24"/>
    </location>
</feature>
<feature type="modified residue" description="N6-methyllysine; alternate" evidence="1">
    <location>
        <position position="24"/>
    </location>
</feature>
<feature type="modified residue" description="Citrulline" evidence="4">
    <location>
        <position position="27"/>
    </location>
</feature>
<feature type="modified residue" description="N6,N6,N6-trimethyllysine; alternate" evidence="2">
    <location>
        <position position="28"/>
    </location>
</feature>
<feature type="modified residue" description="N6,N6-dimethyllysine; alternate" evidence="2">
    <location>
        <position position="28"/>
    </location>
</feature>
<feature type="modified residue" description="N6-(2-hydroxyisobutyryl)lysine; alternate" evidence="1">
    <location>
        <position position="28"/>
    </location>
</feature>
<feature type="modified residue" description="N6-acetyllysine; alternate" evidence="1">
    <location>
        <position position="28"/>
    </location>
</feature>
<feature type="modified residue" description="N6-glutaryllysine; alternate" evidence="4">
    <location>
        <position position="28"/>
    </location>
</feature>
<feature type="modified residue" description="N6-lactoyllysine; alternate" evidence="1">
    <location>
        <position position="28"/>
    </location>
</feature>
<feature type="modified residue" description="N6-methyllysine; alternate" evidence="2">
    <location>
        <position position="28"/>
    </location>
</feature>
<feature type="modified residue" description="ADP-ribosylserine; alternate" evidence="1">
    <location>
        <position position="29"/>
    </location>
</feature>
<feature type="modified residue" description="Phosphoserine; alternate" evidence="5">
    <location>
        <position position="29"/>
    </location>
</feature>
<feature type="modified residue" description="N6,N6,N6-trimethyllysine; alternate" evidence="1">
    <location>
        <position position="37"/>
    </location>
</feature>
<feature type="modified residue" description="N6,N6-dimethyllysine; alternate" evidence="1">
    <location>
        <position position="37"/>
    </location>
</feature>
<feature type="modified residue" description="N6-(2-hydroxyisobutyryl)lysine; alternate" evidence="1">
    <location>
        <position position="37"/>
    </location>
</feature>
<feature type="modified residue" description="N6-acetyllysine; alternate" evidence="1">
    <location>
        <position position="37"/>
    </location>
</feature>
<feature type="modified residue" description="N6-methyllysine; alternate" evidence="1">
    <location>
        <position position="37"/>
    </location>
</feature>
<feature type="modified residue" description="N6-methyllysine" evidence="1">
    <location>
        <position position="38"/>
    </location>
</feature>
<feature type="modified residue" description="Phosphotyrosine" evidence="1">
    <location>
        <position position="42"/>
    </location>
</feature>
<feature type="modified residue" description="N6,N6,N6-trimethyllysine; alternate" evidence="1">
    <location>
        <position position="57"/>
    </location>
</feature>
<feature type="modified residue" description="N6-(2-hydroxyisobutyryl)lysine; alternate" evidence="1">
    <location>
        <position position="57"/>
    </location>
</feature>
<feature type="modified residue" description="N6-(beta-hydroxybutyryl)lysine; alternate" evidence="3">
    <location>
        <position position="57"/>
    </location>
</feature>
<feature type="modified residue" description="N6-acetyllysine; alternate" evidence="1">
    <location>
        <position position="57"/>
    </location>
</feature>
<feature type="modified residue" description="N6-glutaryllysine; alternate" evidence="4">
    <location>
        <position position="57"/>
    </location>
</feature>
<feature type="modified residue" description="N6-lactoyllysine; alternate" evidence="3">
    <location>
        <position position="57"/>
    </location>
</feature>
<feature type="modified residue" description="N6-methyllysine" evidence="1">
    <location>
        <position position="57"/>
    </location>
</feature>
<feature type="modified residue" description="N6-succinyllysine; alternate" evidence="1">
    <location>
        <position position="57"/>
    </location>
</feature>
<feature type="modified residue" description="Phosphoserine" evidence="5">
    <location>
        <position position="58"/>
    </location>
</feature>
<feature type="modified residue" description="N6-(2-hydroxyisobutyryl)lysine; alternate" evidence="1">
    <location>
        <position position="65"/>
    </location>
</feature>
<feature type="modified residue" description="N6-methyllysine; alternate" evidence="1">
    <location>
        <position position="65"/>
    </location>
</feature>
<feature type="modified residue" description="N6,N6,N6-trimethyllysine; alternate" evidence="3">
    <location>
        <position position="80"/>
    </location>
</feature>
<feature type="modified residue" description="N6,N6-dimethyllysine; alternate" evidence="1">
    <location>
        <position position="80"/>
    </location>
</feature>
<feature type="modified residue" description="N6-(2-hydroxyisobutyryl)lysine; alternate" evidence="1">
    <location>
        <position position="80"/>
    </location>
</feature>
<feature type="modified residue" description="N6-acetyllysine; alternate" evidence="1">
    <location>
        <position position="80"/>
    </location>
</feature>
<feature type="modified residue" description="N6-glutaryllysine; alternate" evidence="4">
    <location>
        <position position="80"/>
    </location>
</feature>
<feature type="modified residue" description="N6-lactoyllysine; alternate" evidence="1">
    <location>
        <position position="80"/>
    </location>
</feature>
<feature type="modified residue" description="N6-methyllysine; alternate" evidence="1">
    <location>
        <position position="80"/>
    </location>
</feature>
<feature type="modified residue" description="N6-succinyllysine; alternate" evidence="1">
    <location>
        <position position="80"/>
    </location>
</feature>
<feature type="modified residue" description="Phosphothreonine" evidence="5">
    <location>
        <position position="81"/>
    </location>
</feature>
<feature type="modified residue" description="Phosphoserine" evidence="4">
    <location>
        <position position="87"/>
    </location>
</feature>
<feature type="modified residue" description="Phosphothreonine" evidence="6">
    <location>
        <position position="108"/>
    </location>
</feature>
<feature type="modified residue" description="N6-acetyllysine; alternate" evidence="1">
    <location>
        <position position="116"/>
    </location>
</feature>
<feature type="modified residue" description="N6-glutaryllysine; alternate" evidence="4">
    <location>
        <position position="116"/>
    </location>
</feature>
<feature type="modified residue" description="N6-(2-hydroxyisobutyryl)lysine; alternate" evidence="1">
    <location>
        <position position="123"/>
    </location>
</feature>
<feature type="modified residue" description="N6-acetyllysine; alternate" evidence="1">
    <location>
        <position position="123"/>
    </location>
</feature>
<feature type="modified residue" description="N6-glutaryllysine; alternate" evidence="4">
    <location>
        <position position="123"/>
    </location>
</feature>
<feature type="modified residue" description="N6-methyllysine; alternate" evidence="1">
    <location>
        <position position="123"/>
    </location>
</feature>
<feature type="modified residue" description="N6-succinyllysine; alternate" evidence="1">
    <location>
        <position position="123"/>
    </location>
</feature>